<evidence type="ECO:0000255" key="1">
    <source>
        <dbReference type="HAMAP-Rule" id="MF_00016"/>
    </source>
</evidence>
<keyword id="KW-0067">ATP-binding</keyword>
<keyword id="KW-0963">Cytoplasm</keyword>
<keyword id="KW-0227">DNA damage</keyword>
<keyword id="KW-0233">DNA recombination</keyword>
<keyword id="KW-0234">DNA repair</keyword>
<keyword id="KW-0238">DNA-binding</keyword>
<keyword id="KW-0378">Hydrolase</keyword>
<keyword id="KW-0547">Nucleotide-binding</keyword>
<organism>
    <name type="scientific">Christiangramia forsetii (strain DSM 17595 / CGMCC 1.15422 / KT0803)</name>
    <name type="common">Gramella forsetii</name>
    <dbReference type="NCBI Taxonomy" id="411154"/>
    <lineage>
        <taxon>Bacteria</taxon>
        <taxon>Pseudomonadati</taxon>
        <taxon>Bacteroidota</taxon>
        <taxon>Flavobacteriia</taxon>
        <taxon>Flavobacteriales</taxon>
        <taxon>Flavobacteriaceae</taxon>
        <taxon>Christiangramia</taxon>
    </lineage>
</organism>
<sequence length="343" mass="37831">MMNENLDATGENFSPEEFDVERALRPLSFDDFAGQEQVLENLQIFVQAANLRGEALDHTLFHGPPGLGKTTLAHILANELNVGIKITSGPVLDKPGDLAGLLTNLDERDILFIDEIHRLSPIVEEYLYSAMEDYRIDIMIETGPNARTVQINLNPFTLIGATTRSGLLTAPMRARFGISSRLQYYSTELLSGIVERSSDILKVPITQDAAIEIAGRSRGTPRIANALLRRVRDFAQIKGNGKIDIEIAKFGLKALNVDAHGLDEMDNKILATIIDKFKGGPVGITTLATAVSESAETIEEVYEPFLIQQGFIYRTPRGREVTEHAYRHLGRVKGSNQGGLFDN</sequence>
<comment type="function">
    <text evidence="1">The RuvA-RuvB-RuvC complex processes Holliday junction (HJ) DNA during genetic recombination and DNA repair, while the RuvA-RuvB complex plays an important role in the rescue of blocked DNA replication forks via replication fork reversal (RFR). RuvA specifically binds to HJ cruciform DNA, conferring on it an open structure. The RuvB hexamer acts as an ATP-dependent pump, pulling dsDNA into and through the RuvAB complex. RuvB forms 2 homohexamers on either side of HJ DNA bound by 1 or 2 RuvA tetramers; 4 subunits per hexamer contact DNA at a time. Coordinated motions by a converter formed by DNA-disengaged RuvB subunits stimulates ATP hydrolysis and nucleotide exchange. Immobilization of the converter enables RuvB to convert the ATP-contained energy into a lever motion, pulling 2 nucleotides of DNA out of the RuvA tetramer per ATP hydrolyzed, thus driving DNA branch migration. The RuvB motors rotate together with the DNA substrate, which together with the progressing nucleotide cycle form the mechanistic basis for DNA recombination by continuous HJ branch migration. Branch migration allows RuvC to scan DNA until it finds its consensus sequence, where it cleaves and resolves cruciform DNA.</text>
</comment>
<comment type="catalytic activity">
    <reaction evidence="1">
        <text>ATP + H2O = ADP + phosphate + H(+)</text>
        <dbReference type="Rhea" id="RHEA:13065"/>
        <dbReference type="ChEBI" id="CHEBI:15377"/>
        <dbReference type="ChEBI" id="CHEBI:15378"/>
        <dbReference type="ChEBI" id="CHEBI:30616"/>
        <dbReference type="ChEBI" id="CHEBI:43474"/>
        <dbReference type="ChEBI" id="CHEBI:456216"/>
    </reaction>
</comment>
<comment type="subunit">
    <text evidence="1">Homohexamer. Forms an RuvA(8)-RuvB(12)-Holliday junction (HJ) complex. HJ DNA is sandwiched between 2 RuvA tetramers; dsDNA enters through RuvA and exits via RuvB. An RuvB hexamer assembles on each DNA strand where it exits the tetramer. Each RuvB hexamer is contacted by two RuvA subunits (via domain III) on 2 adjacent RuvB subunits; this complex drives branch migration. In the full resolvosome a probable DNA-RuvA(4)-RuvB(12)-RuvC(2) complex forms which resolves the HJ.</text>
</comment>
<comment type="subcellular location">
    <subcellularLocation>
        <location evidence="1">Cytoplasm</location>
    </subcellularLocation>
</comment>
<comment type="domain">
    <text evidence="1">Has 3 domains, the large (RuvB-L) and small ATPase (RuvB-S) domains and the C-terminal head (RuvB-H) domain. The head domain binds DNA, while the ATPase domains jointly bind ATP, ADP or are empty depending on the state of the subunit in the translocation cycle. During a single DNA translocation step the structure of each domain remains the same, but their relative positions change.</text>
</comment>
<comment type="similarity">
    <text evidence="1">Belongs to the RuvB family.</text>
</comment>
<protein>
    <recommendedName>
        <fullName evidence="1">Holliday junction branch migration complex subunit RuvB</fullName>
        <ecNumber evidence="1">3.6.4.-</ecNumber>
    </recommendedName>
</protein>
<accession>A0LXR1</accession>
<feature type="chain" id="PRO_0000322796" description="Holliday junction branch migration complex subunit RuvB">
    <location>
        <begin position="1"/>
        <end position="343"/>
    </location>
</feature>
<feature type="region of interest" description="Large ATPase domain (RuvB-L)" evidence="1">
    <location>
        <begin position="1"/>
        <end position="185"/>
    </location>
</feature>
<feature type="region of interest" description="Small ATPAse domain (RuvB-S)" evidence="1">
    <location>
        <begin position="186"/>
        <end position="256"/>
    </location>
</feature>
<feature type="region of interest" description="Head domain (RuvB-H)" evidence="1">
    <location>
        <begin position="259"/>
        <end position="343"/>
    </location>
</feature>
<feature type="binding site" evidence="1">
    <location>
        <position position="24"/>
    </location>
    <ligand>
        <name>ATP</name>
        <dbReference type="ChEBI" id="CHEBI:30616"/>
    </ligand>
</feature>
<feature type="binding site" evidence="1">
    <location>
        <position position="25"/>
    </location>
    <ligand>
        <name>ATP</name>
        <dbReference type="ChEBI" id="CHEBI:30616"/>
    </ligand>
</feature>
<feature type="binding site" evidence="1">
    <location>
        <position position="66"/>
    </location>
    <ligand>
        <name>ATP</name>
        <dbReference type="ChEBI" id="CHEBI:30616"/>
    </ligand>
</feature>
<feature type="binding site" evidence="1">
    <location>
        <position position="69"/>
    </location>
    <ligand>
        <name>ATP</name>
        <dbReference type="ChEBI" id="CHEBI:30616"/>
    </ligand>
</feature>
<feature type="binding site" evidence="1">
    <location>
        <position position="70"/>
    </location>
    <ligand>
        <name>ATP</name>
        <dbReference type="ChEBI" id="CHEBI:30616"/>
    </ligand>
</feature>
<feature type="binding site" evidence="1">
    <location>
        <position position="70"/>
    </location>
    <ligand>
        <name>Mg(2+)</name>
        <dbReference type="ChEBI" id="CHEBI:18420"/>
    </ligand>
</feature>
<feature type="binding site" evidence="1">
    <location>
        <position position="71"/>
    </location>
    <ligand>
        <name>ATP</name>
        <dbReference type="ChEBI" id="CHEBI:30616"/>
    </ligand>
</feature>
<feature type="binding site" evidence="1">
    <location>
        <begin position="132"/>
        <end position="134"/>
    </location>
    <ligand>
        <name>ATP</name>
        <dbReference type="ChEBI" id="CHEBI:30616"/>
    </ligand>
</feature>
<feature type="binding site" evidence="1">
    <location>
        <position position="175"/>
    </location>
    <ligand>
        <name>ATP</name>
        <dbReference type="ChEBI" id="CHEBI:30616"/>
    </ligand>
</feature>
<feature type="binding site" evidence="1">
    <location>
        <position position="185"/>
    </location>
    <ligand>
        <name>ATP</name>
        <dbReference type="ChEBI" id="CHEBI:30616"/>
    </ligand>
</feature>
<feature type="binding site" evidence="1">
    <location>
        <position position="222"/>
    </location>
    <ligand>
        <name>ATP</name>
        <dbReference type="ChEBI" id="CHEBI:30616"/>
    </ligand>
</feature>
<feature type="binding site" evidence="1">
    <location>
        <position position="314"/>
    </location>
    <ligand>
        <name>DNA</name>
        <dbReference type="ChEBI" id="CHEBI:16991"/>
    </ligand>
</feature>
<feature type="binding site" evidence="1">
    <location>
        <position position="319"/>
    </location>
    <ligand>
        <name>DNA</name>
        <dbReference type="ChEBI" id="CHEBI:16991"/>
    </ligand>
</feature>
<dbReference type="EC" id="3.6.4.-" evidence="1"/>
<dbReference type="EMBL" id="CU207366">
    <property type="protein sequence ID" value="CAL65156.1"/>
    <property type="molecule type" value="Genomic_DNA"/>
</dbReference>
<dbReference type="SMR" id="A0LXR1"/>
<dbReference type="STRING" id="411154.GFO_0168"/>
<dbReference type="KEGG" id="gfo:GFO_0168"/>
<dbReference type="eggNOG" id="COG2255">
    <property type="taxonomic scope" value="Bacteria"/>
</dbReference>
<dbReference type="HOGENOM" id="CLU_055599_1_0_10"/>
<dbReference type="Proteomes" id="UP000000755">
    <property type="component" value="Chromosome"/>
</dbReference>
<dbReference type="GO" id="GO:0005737">
    <property type="term" value="C:cytoplasm"/>
    <property type="evidence" value="ECO:0007669"/>
    <property type="project" value="UniProtKB-SubCell"/>
</dbReference>
<dbReference type="GO" id="GO:0048476">
    <property type="term" value="C:Holliday junction resolvase complex"/>
    <property type="evidence" value="ECO:0007669"/>
    <property type="project" value="UniProtKB-UniRule"/>
</dbReference>
<dbReference type="GO" id="GO:0005524">
    <property type="term" value="F:ATP binding"/>
    <property type="evidence" value="ECO:0007669"/>
    <property type="project" value="UniProtKB-UniRule"/>
</dbReference>
<dbReference type="GO" id="GO:0016887">
    <property type="term" value="F:ATP hydrolysis activity"/>
    <property type="evidence" value="ECO:0007669"/>
    <property type="project" value="InterPro"/>
</dbReference>
<dbReference type="GO" id="GO:0000400">
    <property type="term" value="F:four-way junction DNA binding"/>
    <property type="evidence" value="ECO:0007669"/>
    <property type="project" value="UniProtKB-UniRule"/>
</dbReference>
<dbReference type="GO" id="GO:0009378">
    <property type="term" value="F:four-way junction helicase activity"/>
    <property type="evidence" value="ECO:0007669"/>
    <property type="project" value="InterPro"/>
</dbReference>
<dbReference type="GO" id="GO:0006310">
    <property type="term" value="P:DNA recombination"/>
    <property type="evidence" value="ECO:0007669"/>
    <property type="project" value="UniProtKB-UniRule"/>
</dbReference>
<dbReference type="GO" id="GO:0006281">
    <property type="term" value="P:DNA repair"/>
    <property type="evidence" value="ECO:0007669"/>
    <property type="project" value="UniProtKB-UniRule"/>
</dbReference>
<dbReference type="CDD" id="cd00009">
    <property type="entry name" value="AAA"/>
    <property type="match status" value="1"/>
</dbReference>
<dbReference type="Gene3D" id="1.10.8.60">
    <property type="match status" value="1"/>
</dbReference>
<dbReference type="Gene3D" id="3.40.50.300">
    <property type="entry name" value="P-loop containing nucleotide triphosphate hydrolases"/>
    <property type="match status" value="1"/>
</dbReference>
<dbReference type="Gene3D" id="1.10.10.10">
    <property type="entry name" value="Winged helix-like DNA-binding domain superfamily/Winged helix DNA-binding domain"/>
    <property type="match status" value="1"/>
</dbReference>
<dbReference type="HAMAP" id="MF_00016">
    <property type="entry name" value="DNA_HJ_migration_RuvB"/>
    <property type="match status" value="1"/>
</dbReference>
<dbReference type="InterPro" id="IPR003593">
    <property type="entry name" value="AAA+_ATPase"/>
</dbReference>
<dbReference type="InterPro" id="IPR041445">
    <property type="entry name" value="AAA_lid_4"/>
</dbReference>
<dbReference type="InterPro" id="IPR004605">
    <property type="entry name" value="DNA_helicase_Holl-junc_RuvB"/>
</dbReference>
<dbReference type="InterPro" id="IPR027417">
    <property type="entry name" value="P-loop_NTPase"/>
</dbReference>
<dbReference type="InterPro" id="IPR008824">
    <property type="entry name" value="RuvB-like_N"/>
</dbReference>
<dbReference type="InterPro" id="IPR008823">
    <property type="entry name" value="RuvB_C"/>
</dbReference>
<dbReference type="InterPro" id="IPR036388">
    <property type="entry name" value="WH-like_DNA-bd_sf"/>
</dbReference>
<dbReference type="InterPro" id="IPR036390">
    <property type="entry name" value="WH_DNA-bd_sf"/>
</dbReference>
<dbReference type="NCBIfam" id="NF000868">
    <property type="entry name" value="PRK00080.1"/>
    <property type="match status" value="1"/>
</dbReference>
<dbReference type="NCBIfam" id="TIGR00635">
    <property type="entry name" value="ruvB"/>
    <property type="match status" value="1"/>
</dbReference>
<dbReference type="PANTHER" id="PTHR42848">
    <property type="match status" value="1"/>
</dbReference>
<dbReference type="PANTHER" id="PTHR42848:SF1">
    <property type="entry name" value="HOLLIDAY JUNCTION BRANCH MIGRATION COMPLEX SUBUNIT RUVB"/>
    <property type="match status" value="1"/>
</dbReference>
<dbReference type="Pfam" id="PF17864">
    <property type="entry name" value="AAA_lid_4"/>
    <property type="match status" value="1"/>
</dbReference>
<dbReference type="Pfam" id="PF05491">
    <property type="entry name" value="RuvB_C"/>
    <property type="match status" value="1"/>
</dbReference>
<dbReference type="Pfam" id="PF05496">
    <property type="entry name" value="RuvB_N"/>
    <property type="match status" value="1"/>
</dbReference>
<dbReference type="SMART" id="SM00382">
    <property type="entry name" value="AAA"/>
    <property type="match status" value="1"/>
</dbReference>
<dbReference type="SUPFAM" id="SSF52540">
    <property type="entry name" value="P-loop containing nucleoside triphosphate hydrolases"/>
    <property type="match status" value="1"/>
</dbReference>
<dbReference type="SUPFAM" id="SSF46785">
    <property type="entry name" value="Winged helix' DNA-binding domain"/>
    <property type="match status" value="1"/>
</dbReference>
<name>RUVB_CHRFK</name>
<proteinExistence type="inferred from homology"/>
<gene>
    <name evidence="1" type="primary">ruvB</name>
    <name type="ordered locus">GFO_0168</name>
</gene>
<reference key="1">
    <citation type="journal article" date="2006" name="Environ. Microbiol.">
        <title>Whole genome analysis of the marine Bacteroidetes'Gramella forsetii' reveals adaptations to degradation of polymeric organic matter.</title>
        <authorList>
            <person name="Bauer M."/>
            <person name="Kube M."/>
            <person name="Teeling H."/>
            <person name="Richter M."/>
            <person name="Lombardot T."/>
            <person name="Allers E."/>
            <person name="Wuerdemann C.A."/>
            <person name="Quast C."/>
            <person name="Kuhl H."/>
            <person name="Knaust F."/>
            <person name="Woebken D."/>
            <person name="Bischof K."/>
            <person name="Mussmann M."/>
            <person name="Choudhuri J.V."/>
            <person name="Meyer F."/>
            <person name="Reinhardt R."/>
            <person name="Amann R.I."/>
            <person name="Gloeckner F.O."/>
        </authorList>
    </citation>
    <scope>NUCLEOTIDE SEQUENCE [LARGE SCALE GENOMIC DNA]</scope>
    <source>
        <strain>DSM 17595 / CGMCC 1.15422 / KT0803</strain>
    </source>
</reference>